<dbReference type="EMBL" id="AE008922">
    <property type="protein sequence ID" value="AAM42667.1"/>
    <property type="molecule type" value="Genomic_DNA"/>
</dbReference>
<dbReference type="RefSeq" id="NP_638743.1">
    <property type="nucleotide sequence ID" value="NC_003902.1"/>
</dbReference>
<dbReference type="SMR" id="Q8P5E4"/>
<dbReference type="STRING" id="190485.XCC3397"/>
<dbReference type="EnsemblBacteria" id="AAM42667">
    <property type="protein sequence ID" value="AAM42667"/>
    <property type="gene ID" value="XCC3397"/>
</dbReference>
<dbReference type="KEGG" id="xcc:XCC3397"/>
<dbReference type="PATRIC" id="fig|190485.4.peg.3633"/>
<dbReference type="eggNOG" id="COG0218">
    <property type="taxonomic scope" value="Bacteria"/>
</dbReference>
<dbReference type="HOGENOM" id="CLU_033732_3_0_6"/>
<dbReference type="OrthoDB" id="9804921at2"/>
<dbReference type="Proteomes" id="UP000001010">
    <property type="component" value="Chromosome"/>
</dbReference>
<dbReference type="GO" id="GO:0005829">
    <property type="term" value="C:cytosol"/>
    <property type="evidence" value="ECO:0000318"/>
    <property type="project" value="GO_Central"/>
</dbReference>
<dbReference type="GO" id="GO:0005525">
    <property type="term" value="F:GTP binding"/>
    <property type="evidence" value="ECO:0007669"/>
    <property type="project" value="UniProtKB-UniRule"/>
</dbReference>
<dbReference type="GO" id="GO:0046872">
    <property type="term" value="F:metal ion binding"/>
    <property type="evidence" value="ECO:0007669"/>
    <property type="project" value="UniProtKB-KW"/>
</dbReference>
<dbReference type="GO" id="GO:0000917">
    <property type="term" value="P:division septum assembly"/>
    <property type="evidence" value="ECO:0007669"/>
    <property type="project" value="UniProtKB-KW"/>
</dbReference>
<dbReference type="CDD" id="cd01876">
    <property type="entry name" value="YihA_EngB"/>
    <property type="match status" value="1"/>
</dbReference>
<dbReference type="FunFam" id="3.40.50.300:FF:000098">
    <property type="entry name" value="Probable GTP-binding protein EngB"/>
    <property type="match status" value="1"/>
</dbReference>
<dbReference type="Gene3D" id="3.40.50.300">
    <property type="entry name" value="P-loop containing nucleotide triphosphate hydrolases"/>
    <property type="match status" value="1"/>
</dbReference>
<dbReference type="HAMAP" id="MF_00321">
    <property type="entry name" value="GTPase_EngB"/>
    <property type="match status" value="1"/>
</dbReference>
<dbReference type="InterPro" id="IPR030393">
    <property type="entry name" value="G_ENGB_dom"/>
</dbReference>
<dbReference type="InterPro" id="IPR006073">
    <property type="entry name" value="GTP-bd"/>
</dbReference>
<dbReference type="InterPro" id="IPR019987">
    <property type="entry name" value="GTP-bd_ribosome_bio_YsxC"/>
</dbReference>
<dbReference type="InterPro" id="IPR027417">
    <property type="entry name" value="P-loop_NTPase"/>
</dbReference>
<dbReference type="NCBIfam" id="TIGR03598">
    <property type="entry name" value="GTPase_YsxC"/>
    <property type="match status" value="1"/>
</dbReference>
<dbReference type="PANTHER" id="PTHR11649:SF13">
    <property type="entry name" value="ENGB-TYPE G DOMAIN-CONTAINING PROTEIN"/>
    <property type="match status" value="1"/>
</dbReference>
<dbReference type="PANTHER" id="PTHR11649">
    <property type="entry name" value="MSS1/TRME-RELATED GTP-BINDING PROTEIN"/>
    <property type="match status" value="1"/>
</dbReference>
<dbReference type="Pfam" id="PF01926">
    <property type="entry name" value="MMR_HSR1"/>
    <property type="match status" value="1"/>
</dbReference>
<dbReference type="SUPFAM" id="SSF52540">
    <property type="entry name" value="P-loop containing nucleoside triphosphate hydrolases"/>
    <property type="match status" value="1"/>
</dbReference>
<dbReference type="PROSITE" id="PS51706">
    <property type="entry name" value="G_ENGB"/>
    <property type="match status" value="1"/>
</dbReference>
<sequence>MSLLIEQARYHLSAHNARQLPDDGGYEVAFAGRSNAGKSSALNALTRQNSLARVSKTPGRTQQLVFFQIQPERYLVDLPGYGYAKVPQDLQAHWQAFIDRYFRTREALRGLVVVMDIRHPLKDYDLQMLGYAAERGLPAHGLLTKADKLGRGQQMQTLQKVKKEVSSRFGDSVTVQTYSGESRQGVDELRGIVGGWLGLDVEPPADA</sequence>
<protein>
    <recommendedName>
        <fullName evidence="1">Probable GTP-binding protein EngB</fullName>
    </recommendedName>
</protein>
<comment type="function">
    <text evidence="1">Necessary for normal cell division and for the maintenance of normal septation.</text>
</comment>
<comment type="cofactor">
    <cofactor evidence="1">
        <name>Mg(2+)</name>
        <dbReference type="ChEBI" id="CHEBI:18420"/>
    </cofactor>
</comment>
<comment type="similarity">
    <text evidence="1">Belongs to the TRAFAC class TrmE-Era-EngA-EngB-Septin-like GTPase superfamily. EngB GTPase family.</text>
</comment>
<proteinExistence type="inferred from homology"/>
<reference key="1">
    <citation type="journal article" date="2002" name="Nature">
        <title>Comparison of the genomes of two Xanthomonas pathogens with differing host specificities.</title>
        <authorList>
            <person name="da Silva A.C.R."/>
            <person name="Ferro J.A."/>
            <person name="Reinach F.C."/>
            <person name="Farah C.S."/>
            <person name="Furlan L.R."/>
            <person name="Quaggio R.B."/>
            <person name="Monteiro-Vitorello C.B."/>
            <person name="Van Sluys M.A."/>
            <person name="Almeida N.F. Jr."/>
            <person name="Alves L.M.C."/>
            <person name="do Amaral A.M."/>
            <person name="Bertolini M.C."/>
            <person name="Camargo L.E.A."/>
            <person name="Camarotte G."/>
            <person name="Cannavan F."/>
            <person name="Cardozo J."/>
            <person name="Chambergo F."/>
            <person name="Ciapina L.P."/>
            <person name="Cicarelli R.M.B."/>
            <person name="Coutinho L.L."/>
            <person name="Cursino-Santos J.R."/>
            <person name="El-Dorry H."/>
            <person name="Faria J.B."/>
            <person name="Ferreira A.J.S."/>
            <person name="Ferreira R.C.C."/>
            <person name="Ferro M.I.T."/>
            <person name="Formighieri E.F."/>
            <person name="Franco M.C."/>
            <person name="Greggio C.C."/>
            <person name="Gruber A."/>
            <person name="Katsuyama A.M."/>
            <person name="Kishi L.T."/>
            <person name="Leite R.P."/>
            <person name="Lemos E.G.M."/>
            <person name="Lemos M.V.F."/>
            <person name="Locali E.C."/>
            <person name="Machado M.A."/>
            <person name="Madeira A.M.B.N."/>
            <person name="Martinez-Rossi N.M."/>
            <person name="Martins E.C."/>
            <person name="Meidanis J."/>
            <person name="Menck C.F.M."/>
            <person name="Miyaki C.Y."/>
            <person name="Moon D.H."/>
            <person name="Moreira L.M."/>
            <person name="Novo M.T.M."/>
            <person name="Okura V.K."/>
            <person name="Oliveira M.C."/>
            <person name="Oliveira V.R."/>
            <person name="Pereira H.A."/>
            <person name="Rossi A."/>
            <person name="Sena J.A.D."/>
            <person name="Silva C."/>
            <person name="de Souza R.F."/>
            <person name="Spinola L.A.F."/>
            <person name="Takita M.A."/>
            <person name="Tamura R.E."/>
            <person name="Teixeira E.C."/>
            <person name="Tezza R.I.D."/>
            <person name="Trindade dos Santos M."/>
            <person name="Truffi D."/>
            <person name="Tsai S.M."/>
            <person name="White F.F."/>
            <person name="Setubal J.C."/>
            <person name="Kitajima J.P."/>
        </authorList>
    </citation>
    <scope>NUCLEOTIDE SEQUENCE [LARGE SCALE GENOMIC DNA]</scope>
    <source>
        <strain>ATCC 33913 / DSM 3586 / NCPPB 528 / LMG 568 / P 25</strain>
    </source>
</reference>
<name>ENGB_XANCP</name>
<keyword id="KW-0131">Cell cycle</keyword>
<keyword id="KW-0132">Cell division</keyword>
<keyword id="KW-0342">GTP-binding</keyword>
<keyword id="KW-0460">Magnesium</keyword>
<keyword id="KW-0479">Metal-binding</keyword>
<keyword id="KW-0547">Nucleotide-binding</keyword>
<keyword id="KW-1185">Reference proteome</keyword>
<keyword id="KW-0717">Septation</keyword>
<feature type="chain" id="PRO_0000157803" description="Probable GTP-binding protein EngB">
    <location>
        <begin position="1"/>
        <end position="207"/>
    </location>
</feature>
<feature type="domain" description="EngB-type G" evidence="1">
    <location>
        <begin position="24"/>
        <end position="199"/>
    </location>
</feature>
<feature type="binding site" evidence="1">
    <location>
        <begin position="32"/>
        <end position="39"/>
    </location>
    <ligand>
        <name>GTP</name>
        <dbReference type="ChEBI" id="CHEBI:37565"/>
    </ligand>
</feature>
<feature type="binding site" evidence="1">
    <location>
        <position position="39"/>
    </location>
    <ligand>
        <name>Mg(2+)</name>
        <dbReference type="ChEBI" id="CHEBI:18420"/>
    </ligand>
</feature>
<feature type="binding site" evidence="1">
    <location>
        <begin position="59"/>
        <end position="63"/>
    </location>
    <ligand>
        <name>GTP</name>
        <dbReference type="ChEBI" id="CHEBI:37565"/>
    </ligand>
</feature>
<feature type="binding site" evidence="1">
    <location>
        <position position="61"/>
    </location>
    <ligand>
        <name>Mg(2+)</name>
        <dbReference type="ChEBI" id="CHEBI:18420"/>
    </ligand>
</feature>
<feature type="binding site" evidence="1">
    <location>
        <begin position="77"/>
        <end position="80"/>
    </location>
    <ligand>
        <name>GTP</name>
        <dbReference type="ChEBI" id="CHEBI:37565"/>
    </ligand>
</feature>
<feature type="binding site" evidence="1">
    <location>
        <begin position="144"/>
        <end position="147"/>
    </location>
    <ligand>
        <name>GTP</name>
        <dbReference type="ChEBI" id="CHEBI:37565"/>
    </ligand>
</feature>
<feature type="binding site" evidence="1">
    <location>
        <begin position="178"/>
        <end position="180"/>
    </location>
    <ligand>
        <name>GTP</name>
        <dbReference type="ChEBI" id="CHEBI:37565"/>
    </ligand>
</feature>
<accession>Q8P5E4</accession>
<evidence type="ECO:0000255" key="1">
    <source>
        <dbReference type="HAMAP-Rule" id="MF_00321"/>
    </source>
</evidence>
<gene>
    <name evidence="1" type="primary">engB</name>
    <name type="ordered locus">XCC3397</name>
</gene>
<organism>
    <name type="scientific">Xanthomonas campestris pv. campestris (strain ATCC 33913 / DSM 3586 / NCPPB 528 / LMG 568 / P 25)</name>
    <dbReference type="NCBI Taxonomy" id="190485"/>
    <lineage>
        <taxon>Bacteria</taxon>
        <taxon>Pseudomonadati</taxon>
        <taxon>Pseudomonadota</taxon>
        <taxon>Gammaproteobacteria</taxon>
        <taxon>Lysobacterales</taxon>
        <taxon>Lysobacteraceae</taxon>
        <taxon>Xanthomonas</taxon>
    </lineage>
</organism>